<evidence type="ECO:0000255" key="1">
    <source>
        <dbReference type="HAMAP-Rule" id="MF_00001"/>
    </source>
</evidence>
<name>PYRB_MOOTA</name>
<proteinExistence type="inferred from homology"/>
<comment type="function">
    <text evidence="1">Catalyzes the condensation of carbamoyl phosphate and aspartate to form carbamoyl aspartate and inorganic phosphate, the committed step in the de novo pyrimidine nucleotide biosynthesis pathway.</text>
</comment>
<comment type="catalytic activity">
    <reaction evidence="1">
        <text>carbamoyl phosphate + L-aspartate = N-carbamoyl-L-aspartate + phosphate + H(+)</text>
        <dbReference type="Rhea" id="RHEA:20013"/>
        <dbReference type="ChEBI" id="CHEBI:15378"/>
        <dbReference type="ChEBI" id="CHEBI:29991"/>
        <dbReference type="ChEBI" id="CHEBI:32814"/>
        <dbReference type="ChEBI" id="CHEBI:43474"/>
        <dbReference type="ChEBI" id="CHEBI:58228"/>
        <dbReference type="EC" id="2.1.3.2"/>
    </reaction>
</comment>
<comment type="pathway">
    <text evidence="1">Pyrimidine metabolism; UMP biosynthesis via de novo pathway; (S)-dihydroorotate from bicarbonate: step 2/3.</text>
</comment>
<comment type="subunit">
    <text evidence="1">Heterododecamer (2C3:3R2) of six catalytic PyrB chains organized as two trimers (C3), and six regulatory PyrI chains organized as three dimers (R2).</text>
</comment>
<comment type="similarity">
    <text evidence="1">Belongs to the aspartate/ornithine carbamoyltransferase superfamily. ATCase family.</text>
</comment>
<reference key="1">
    <citation type="journal article" date="2008" name="Environ. Microbiol.">
        <title>The complete genome sequence of Moorella thermoacetica (f. Clostridium thermoaceticum).</title>
        <authorList>
            <person name="Pierce E."/>
            <person name="Xie G."/>
            <person name="Barabote R.D."/>
            <person name="Saunders E."/>
            <person name="Han C.S."/>
            <person name="Detter J.C."/>
            <person name="Richardson P."/>
            <person name="Brettin T.S."/>
            <person name="Das A."/>
            <person name="Ljungdahl L.G."/>
            <person name="Ragsdale S.W."/>
        </authorList>
    </citation>
    <scope>NUCLEOTIDE SEQUENCE [LARGE SCALE GENOMIC DNA]</scope>
    <source>
        <strain>ATCC 39073 / JCM 9320</strain>
    </source>
</reference>
<gene>
    <name evidence="1" type="primary">pyrB</name>
    <name type="ordered locus">Moth_0879</name>
</gene>
<accession>Q2RK43</accession>
<feature type="chain" id="PRO_1000000017" description="Aspartate carbamoyltransferase catalytic subunit">
    <location>
        <begin position="1"/>
        <end position="307"/>
    </location>
</feature>
<feature type="binding site" evidence="1">
    <location>
        <position position="58"/>
    </location>
    <ligand>
        <name>carbamoyl phosphate</name>
        <dbReference type="ChEBI" id="CHEBI:58228"/>
    </ligand>
</feature>
<feature type="binding site" evidence="1">
    <location>
        <position position="59"/>
    </location>
    <ligand>
        <name>carbamoyl phosphate</name>
        <dbReference type="ChEBI" id="CHEBI:58228"/>
    </ligand>
</feature>
<feature type="binding site" evidence="1">
    <location>
        <position position="86"/>
    </location>
    <ligand>
        <name>L-aspartate</name>
        <dbReference type="ChEBI" id="CHEBI:29991"/>
    </ligand>
</feature>
<feature type="binding site" evidence="1">
    <location>
        <position position="108"/>
    </location>
    <ligand>
        <name>carbamoyl phosphate</name>
        <dbReference type="ChEBI" id="CHEBI:58228"/>
    </ligand>
</feature>
<feature type="binding site" evidence="1">
    <location>
        <position position="136"/>
    </location>
    <ligand>
        <name>carbamoyl phosphate</name>
        <dbReference type="ChEBI" id="CHEBI:58228"/>
    </ligand>
</feature>
<feature type="binding site" evidence="1">
    <location>
        <position position="139"/>
    </location>
    <ligand>
        <name>carbamoyl phosphate</name>
        <dbReference type="ChEBI" id="CHEBI:58228"/>
    </ligand>
</feature>
<feature type="binding site" evidence="1">
    <location>
        <position position="169"/>
    </location>
    <ligand>
        <name>L-aspartate</name>
        <dbReference type="ChEBI" id="CHEBI:29991"/>
    </ligand>
</feature>
<feature type="binding site" evidence="1">
    <location>
        <position position="223"/>
    </location>
    <ligand>
        <name>L-aspartate</name>
        <dbReference type="ChEBI" id="CHEBI:29991"/>
    </ligand>
</feature>
<feature type="binding site" evidence="1">
    <location>
        <position position="264"/>
    </location>
    <ligand>
        <name>carbamoyl phosphate</name>
        <dbReference type="ChEBI" id="CHEBI:58228"/>
    </ligand>
</feature>
<feature type="binding site" evidence="1">
    <location>
        <position position="265"/>
    </location>
    <ligand>
        <name>carbamoyl phosphate</name>
        <dbReference type="ChEBI" id="CHEBI:58228"/>
    </ligand>
</feature>
<dbReference type="EC" id="2.1.3.2" evidence="1"/>
<dbReference type="EMBL" id="CP000232">
    <property type="protein sequence ID" value="ABC19196.1"/>
    <property type="molecule type" value="Genomic_DNA"/>
</dbReference>
<dbReference type="RefSeq" id="YP_429739.1">
    <property type="nucleotide sequence ID" value="NC_007644.1"/>
</dbReference>
<dbReference type="SMR" id="Q2RK43"/>
<dbReference type="STRING" id="264732.Moth_0879"/>
<dbReference type="EnsemblBacteria" id="ABC19196">
    <property type="protein sequence ID" value="ABC19196"/>
    <property type="gene ID" value="Moth_0879"/>
</dbReference>
<dbReference type="KEGG" id="mta:Moth_0879"/>
<dbReference type="PATRIC" id="fig|264732.11.peg.943"/>
<dbReference type="eggNOG" id="COG0540">
    <property type="taxonomic scope" value="Bacteria"/>
</dbReference>
<dbReference type="HOGENOM" id="CLU_043846_2_0_9"/>
<dbReference type="OrthoDB" id="9802587at2"/>
<dbReference type="UniPathway" id="UPA00070">
    <property type="reaction ID" value="UER00116"/>
</dbReference>
<dbReference type="GO" id="GO:0005829">
    <property type="term" value="C:cytosol"/>
    <property type="evidence" value="ECO:0007669"/>
    <property type="project" value="TreeGrafter"/>
</dbReference>
<dbReference type="GO" id="GO:0016597">
    <property type="term" value="F:amino acid binding"/>
    <property type="evidence" value="ECO:0007669"/>
    <property type="project" value="InterPro"/>
</dbReference>
<dbReference type="GO" id="GO:0004070">
    <property type="term" value="F:aspartate carbamoyltransferase activity"/>
    <property type="evidence" value="ECO:0007669"/>
    <property type="project" value="UniProtKB-UniRule"/>
</dbReference>
<dbReference type="GO" id="GO:0006207">
    <property type="term" value="P:'de novo' pyrimidine nucleobase biosynthetic process"/>
    <property type="evidence" value="ECO:0007669"/>
    <property type="project" value="InterPro"/>
</dbReference>
<dbReference type="GO" id="GO:0044205">
    <property type="term" value="P:'de novo' UMP biosynthetic process"/>
    <property type="evidence" value="ECO:0007669"/>
    <property type="project" value="UniProtKB-UniRule"/>
</dbReference>
<dbReference type="GO" id="GO:0006520">
    <property type="term" value="P:amino acid metabolic process"/>
    <property type="evidence" value="ECO:0007669"/>
    <property type="project" value="InterPro"/>
</dbReference>
<dbReference type="FunFam" id="3.40.50.1370:FF:000007">
    <property type="entry name" value="Aspartate carbamoyltransferase"/>
    <property type="match status" value="1"/>
</dbReference>
<dbReference type="Gene3D" id="3.40.50.1370">
    <property type="entry name" value="Aspartate/ornithine carbamoyltransferase"/>
    <property type="match status" value="2"/>
</dbReference>
<dbReference type="HAMAP" id="MF_00001">
    <property type="entry name" value="Asp_carb_tr"/>
    <property type="match status" value="1"/>
</dbReference>
<dbReference type="InterPro" id="IPR006132">
    <property type="entry name" value="Asp/Orn_carbamoyltranf_P-bd"/>
</dbReference>
<dbReference type="InterPro" id="IPR006130">
    <property type="entry name" value="Asp/Orn_carbamoylTrfase"/>
</dbReference>
<dbReference type="InterPro" id="IPR036901">
    <property type="entry name" value="Asp/Orn_carbamoylTrfase_sf"/>
</dbReference>
<dbReference type="InterPro" id="IPR002082">
    <property type="entry name" value="Asp_carbamoyltransf"/>
</dbReference>
<dbReference type="InterPro" id="IPR006131">
    <property type="entry name" value="Asp_carbamoyltransf_Asp/Orn-bd"/>
</dbReference>
<dbReference type="NCBIfam" id="TIGR00670">
    <property type="entry name" value="asp_carb_tr"/>
    <property type="match status" value="1"/>
</dbReference>
<dbReference type="NCBIfam" id="NF002032">
    <property type="entry name" value="PRK00856.1"/>
    <property type="match status" value="1"/>
</dbReference>
<dbReference type="PANTHER" id="PTHR45753:SF6">
    <property type="entry name" value="ASPARTATE CARBAMOYLTRANSFERASE"/>
    <property type="match status" value="1"/>
</dbReference>
<dbReference type="PANTHER" id="PTHR45753">
    <property type="entry name" value="ORNITHINE CARBAMOYLTRANSFERASE, MITOCHONDRIAL"/>
    <property type="match status" value="1"/>
</dbReference>
<dbReference type="Pfam" id="PF00185">
    <property type="entry name" value="OTCace"/>
    <property type="match status" value="1"/>
</dbReference>
<dbReference type="Pfam" id="PF02729">
    <property type="entry name" value="OTCace_N"/>
    <property type="match status" value="1"/>
</dbReference>
<dbReference type="PRINTS" id="PR00100">
    <property type="entry name" value="AOTCASE"/>
</dbReference>
<dbReference type="PRINTS" id="PR00101">
    <property type="entry name" value="ATCASE"/>
</dbReference>
<dbReference type="SUPFAM" id="SSF53671">
    <property type="entry name" value="Aspartate/ornithine carbamoyltransferase"/>
    <property type="match status" value="1"/>
</dbReference>
<dbReference type="PROSITE" id="PS00097">
    <property type="entry name" value="CARBAMOYLTRANSFERASE"/>
    <property type="match status" value="1"/>
</dbReference>
<protein>
    <recommendedName>
        <fullName evidence="1">Aspartate carbamoyltransferase catalytic subunit</fullName>
        <ecNumber evidence="1">2.1.3.2</ecNumber>
    </recommendedName>
    <alternativeName>
        <fullName evidence="1">Aspartate transcarbamylase</fullName>
        <shortName evidence="1">ATCase</shortName>
    </alternativeName>
</protein>
<sequence>MRLQRKDLLGLKDLSAEEIELILETAAPMKEILGRDIKKVPTLRGKLVVTMFYEPSTRTRTSFELAAKYMGADTMSIATATSSVQKGESLRDTARTLAAMGTDAVIIRHSAAGSPALLARTIEASVLNGGDGMHEHPTQALLDMFTIKEKLGGFKGLKVAILGDILHSRVARSNIWGLTKMGAEVRVVGPATLIPPEIENLGVKVYYNAEEALKGVDVINVLRIQRERQKKGLFPSLREYARLYELTPERLKLARPGALVLHPGPMNRGIEIAPAVADGLQAAITEQVTNGVAVRMALLYLLIGGAN</sequence>
<keyword id="KW-0665">Pyrimidine biosynthesis</keyword>
<keyword id="KW-0808">Transferase</keyword>
<organism>
    <name type="scientific">Moorella thermoacetica (strain ATCC 39073 / JCM 9320)</name>
    <dbReference type="NCBI Taxonomy" id="264732"/>
    <lineage>
        <taxon>Bacteria</taxon>
        <taxon>Bacillati</taxon>
        <taxon>Bacillota</taxon>
        <taxon>Clostridia</taxon>
        <taxon>Moorellales</taxon>
        <taxon>Moorellaceae</taxon>
        <taxon>Moorella</taxon>
    </lineage>
</organism>